<organism>
    <name type="scientific">Salmonella typhimurium (strain LT2 / SGSC1412 / ATCC 700720)</name>
    <dbReference type="NCBI Taxonomy" id="99287"/>
    <lineage>
        <taxon>Bacteria</taxon>
        <taxon>Pseudomonadati</taxon>
        <taxon>Pseudomonadota</taxon>
        <taxon>Gammaproteobacteria</taxon>
        <taxon>Enterobacterales</taxon>
        <taxon>Enterobacteriaceae</taxon>
        <taxon>Salmonella</taxon>
    </lineage>
</organism>
<dbReference type="EC" id="2.4.1.44" evidence="3 6"/>
<dbReference type="EMBL" id="X53847">
    <property type="protein sequence ID" value="CAA37841.1"/>
    <property type="status" value="ALT_FRAME"/>
    <property type="molecule type" value="Genomic_DNA"/>
</dbReference>
<dbReference type="EMBL" id="AF026386">
    <property type="protein sequence ID" value="AAC16412.1"/>
    <property type="molecule type" value="Genomic_DNA"/>
</dbReference>
<dbReference type="EMBL" id="AE006468">
    <property type="protein sequence ID" value="AAL22577.1"/>
    <property type="molecule type" value="Genomic_DNA"/>
</dbReference>
<dbReference type="PIR" id="S12097">
    <property type="entry name" value="S12097"/>
</dbReference>
<dbReference type="RefSeq" id="NP_462618.1">
    <property type="nucleotide sequence ID" value="NC_003197.2"/>
</dbReference>
<dbReference type="RefSeq" id="WP_000088479.1">
    <property type="nucleotide sequence ID" value="NC_003197.2"/>
</dbReference>
<dbReference type="SMR" id="P19816"/>
<dbReference type="STRING" id="99287.STM3718"/>
<dbReference type="CAZy" id="GT8">
    <property type="family name" value="Glycosyltransferase Family 8"/>
</dbReference>
<dbReference type="PaxDb" id="99287-STM3718"/>
<dbReference type="GeneID" id="1255242"/>
<dbReference type="KEGG" id="stm:STM3718"/>
<dbReference type="PATRIC" id="fig|99287.12.peg.3932"/>
<dbReference type="HOGENOM" id="CLU_050833_5_0_6"/>
<dbReference type="OMA" id="TVFLHFC"/>
<dbReference type="PhylomeDB" id="P19816"/>
<dbReference type="BioCyc" id="MetaCyc:STM3718-MONOMER"/>
<dbReference type="BioCyc" id="SENT99287:STM3718-MONOMER"/>
<dbReference type="UniPathway" id="UPA00958"/>
<dbReference type="Proteomes" id="UP000001014">
    <property type="component" value="Chromosome"/>
</dbReference>
<dbReference type="GO" id="GO:0008918">
    <property type="term" value="F:lipopolysaccharide 3-alpha-galactosyltransferase activity"/>
    <property type="evidence" value="ECO:0007669"/>
    <property type="project" value="UniProtKB-EC"/>
</dbReference>
<dbReference type="GO" id="GO:0046872">
    <property type="term" value="F:metal ion binding"/>
    <property type="evidence" value="ECO:0007669"/>
    <property type="project" value="UniProtKB-KW"/>
</dbReference>
<dbReference type="GO" id="GO:0009244">
    <property type="term" value="P:lipopolysaccharide core region biosynthetic process"/>
    <property type="evidence" value="ECO:0007669"/>
    <property type="project" value="UniProtKB-UniPathway"/>
</dbReference>
<dbReference type="CDD" id="cd04194">
    <property type="entry name" value="GT8_A4GalT_like"/>
    <property type="match status" value="1"/>
</dbReference>
<dbReference type="Gene3D" id="3.90.550.10">
    <property type="entry name" value="Spore Coat Polysaccharide Biosynthesis Protein SpsA, Chain A"/>
    <property type="match status" value="1"/>
</dbReference>
<dbReference type="InterPro" id="IPR002495">
    <property type="entry name" value="Glyco_trans_8"/>
</dbReference>
<dbReference type="InterPro" id="IPR013645">
    <property type="entry name" value="Glyco_transf_8N"/>
</dbReference>
<dbReference type="InterPro" id="IPR050748">
    <property type="entry name" value="Glycosyltrans_8_dom-fam"/>
</dbReference>
<dbReference type="InterPro" id="IPR029044">
    <property type="entry name" value="Nucleotide-diphossugar_trans"/>
</dbReference>
<dbReference type="NCBIfam" id="NF011718">
    <property type="entry name" value="PRK15171.1"/>
    <property type="match status" value="1"/>
</dbReference>
<dbReference type="PANTHER" id="PTHR13778">
    <property type="entry name" value="GLYCOSYLTRANSFERASE 8 DOMAIN-CONTAINING PROTEIN"/>
    <property type="match status" value="1"/>
</dbReference>
<dbReference type="PANTHER" id="PTHR13778:SF47">
    <property type="entry name" value="LIPOPOLYSACCHARIDE 1,3-GALACTOSYLTRANSFERASE"/>
    <property type="match status" value="1"/>
</dbReference>
<dbReference type="Pfam" id="PF01501">
    <property type="entry name" value="Glyco_transf_8"/>
    <property type="match status" value="1"/>
</dbReference>
<dbReference type="Pfam" id="PF08437">
    <property type="entry name" value="Glyco_transf_8C"/>
    <property type="match status" value="1"/>
</dbReference>
<dbReference type="SUPFAM" id="SSF53448">
    <property type="entry name" value="Nucleotide-diphospho-sugar transferases"/>
    <property type="match status" value="1"/>
</dbReference>
<proteinExistence type="evidence at protein level"/>
<comment type="function">
    <text evidence="3 6">Galactosyltransferase involved in the biosynthesis of the core oligosaccharide region of lipopolysaccharide (LPS) (PubMed:24479701, PubMed:4898284). Catalyzes the addition of an alpha l,3-linked galactose (galactose I) to the first outer-core glucose (glucose I) (PubMed:24479701, PubMed:4898284). Cannot use UDP-glucose (PubMed:24479701, PubMed:4898284). Activity probably does not require the branched galactose added by WaaB, but it is higher in the presence of this branched galactose (PubMed:24479701).</text>
</comment>
<comment type="catalytic activity">
    <reaction evidence="3 6">
        <text>UDP-alpha-D-galactose + [lipopolysaccharide] = UDP + 3-alpha-D-galactosyl-[lipopolysaccharide].</text>
        <dbReference type="EC" id="2.4.1.44"/>
    </reaction>
</comment>
<comment type="cofactor">
    <cofactor evidence="3 6">
        <name>Mg(2+)</name>
        <dbReference type="ChEBI" id="CHEBI:18420"/>
    </cofactor>
    <text evidence="6">Can also use Ca(2+) or Mn(2+), with lower efficiency.</text>
</comment>
<comment type="activity regulation">
    <text evidence="6">Inhibited in a competitive manner by closely related nonsubstrate lipopolysaccharides.</text>
</comment>
<comment type="biophysicochemical properties">
    <kinetics>
        <KM evidence="6">74 uM for UDP-galactose</KM>
    </kinetics>
    <phDependence>
        <text evidence="6">Optimum pH is 8.5-9.0.</text>
    </phDependence>
</comment>
<comment type="pathway">
    <text evidence="3 4 6">Bacterial outer membrane biogenesis; LPS core biosynthesis.</text>
</comment>
<comment type="disruption phenotype">
    <text evidence="2 4 5">The mutant has no detectable galactosyltransferase I activity (PubMed:3155716). Mutant synthesizes truncated outer core region, does not express the O antigen and cannot invade epithelial cells (PubMed:16495526). LPS contains one galactose and one glucose unit (PubMed:3002571, PubMed:3155716).</text>
</comment>
<comment type="similarity">
    <text evidence="10">Belongs to the glycosyltransferase 8 family.</text>
</comment>
<comment type="sequence caution" evidence="10">
    <conflict type="frameshift">
        <sequence resource="EMBL-CDS" id="CAA37841"/>
    </conflict>
</comment>
<evidence type="ECO:0000250" key="1">
    <source>
        <dbReference type="UniProtKB" id="A0A0H2URJ6"/>
    </source>
</evidence>
<evidence type="ECO:0000269" key="2">
    <source>
    </source>
</evidence>
<evidence type="ECO:0000269" key="3">
    <source>
    </source>
</evidence>
<evidence type="ECO:0000269" key="4">
    <source>
    </source>
</evidence>
<evidence type="ECO:0000269" key="5">
    <source>
    </source>
</evidence>
<evidence type="ECO:0000269" key="6">
    <source>
    </source>
</evidence>
<evidence type="ECO:0000303" key="7">
    <source>
    </source>
</evidence>
<evidence type="ECO:0000303" key="8">
    <source>
    </source>
</evidence>
<evidence type="ECO:0000303" key="9">
    <source>
    </source>
</evidence>
<evidence type="ECO:0000305" key="10"/>
<name>WAAI_SALTY</name>
<sequence length="337" mass="38905">MSRKYFEEEVIQQTLDYNYAQHSDADKFNIAYGIDKNFLFGCGVSIASVLLANPEKALAFHVFTDFFDSEDQQRFEALAKQYATQIVVYLIDCERLKSLPSTKNWTYATYFRFIIADYFSDKTDRVLYLDADIACKGSIQELIDLNFAENEIAAVVAEGELEWWTKRSVSLATPGLVSGYFNAGFILINIPLWTAENISKKAIEMLKDPEVVQRITHLDQDVLNIFLVNKARFVDKKFNTQFSLNYELKDSVINPVDAETVFVHYIGPTKPWHSWGAYPVSQYFLQAKSNSPWSHCALLNPVTSHQLRYAAKHMFNQKHYTSGINYYIAYFKRKLLE</sequence>
<feature type="chain" id="PRO_0000206065" description="Lipopolysaccharide 1,3-galactosyltransferase">
    <location>
        <begin position="1"/>
        <end position="337"/>
    </location>
</feature>
<feature type="short sequence motif" description="DXD 1" evidence="10">
    <location>
        <begin position="130"/>
        <end position="132"/>
    </location>
</feature>
<feature type="short sequence motif" description="DXD 2" evidence="10">
    <location>
        <begin position="219"/>
        <end position="221"/>
    </location>
</feature>
<feature type="binding site" evidence="1">
    <location>
        <begin position="33"/>
        <end position="38"/>
    </location>
    <ligand>
        <name>UDP</name>
        <dbReference type="ChEBI" id="CHEBI:58223"/>
    </ligand>
</feature>
<feature type="binding site" evidence="1">
    <location>
        <begin position="130"/>
        <end position="131"/>
    </location>
    <ligand>
        <name>UDP</name>
        <dbReference type="ChEBI" id="CHEBI:58223"/>
    </ligand>
</feature>
<feature type="binding site" evidence="1">
    <location>
        <position position="130"/>
    </location>
    <ligand>
        <name>Mg(2+)</name>
        <dbReference type="ChEBI" id="CHEBI:18420"/>
    </ligand>
</feature>
<feature type="binding site" evidence="1">
    <location>
        <position position="132"/>
    </location>
    <ligand>
        <name>Mg(2+)</name>
        <dbReference type="ChEBI" id="CHEBI:18420"/>
    </ligand>
</feature>
<feature type="binding site" evidence="1">
    <location>
        <begin position="264"/>
        <end position="270"/>
    </location>
    <ligand>
        <name>UDP</name>
        <dbReference type="ChEBI" id="CHEBI:58223"/>
    </ligand>
</feature>
<feature type="binding site" evidence="1">
    <location>
        <position position="264"/>
    </location>
    <ligand>
        <name>Mg(2+)</name>
        <dbReference type="ChEBI" id="CHEBI:18420"/>
    </ligand>
</feature>
<feature type="sequence conflict" description="In Ref. 1; CAA37841." evidence="10" ref="1">
    <original>FNIAYG</original>
    <variation>LYSLW</variation>
    <location>
        <begin position="28"/>
        <end position="33"/>
    </location>
</feature>
<feature type="sequence conflict" description="In Ref. 1; CAA37841." evidence="10" ref="1">
    <original>A</original>
    <variation>R</variation>
    <location>
        <position position="59"/>
    </location>
</feature>
<feature type="sequence conflict" description="In Ref. 2; AAC16412." evidence="10" ref="2">
    <original>E</original>
    <variation>Q</variation>
    <location>
        <position position="210"/>
    </location>
</feature>
<gene>
    <name evidence="9" type="primary">waaI</name>
    <name evidence="7" type="synonym">rfaI</name>
    <name type="ordered locus">STM3718</name>
</gene>
<protein>
    <recommendedName>
        <fullName evidence="10">Lipopolysaccharide 1,3-galactosyltransferase</fullName>
        <ecNumber evidence="3 6">2.4.1.44</ecNumber>
    </recommendedName>
    <alternativeName>
        <fullName evidence="7">Galactosyltransferase I</fullName>
    </alternativeName>
    <alternativeName>
        <fullName>Lipopolysaccharide 3-alpha-galactosyltransferase</fullName>
    </alternativeName>
    <alternativeName>
        <fullName evidence="8">Uridine diphosphate galactose:lipopolysaccharide alpha-3-galactosyl transferase</fullName>
        <shortName evidence="8">UDP-galactose:lipopolysaccharide alpha-3-galactosyl transferase</shortName>
    </alternativeName>
</protein>
<keyword id="KW-0328">Glycosyltransferase</keyword>
<keyword id="KW-0448">Lipopolysaccharide biosynthesis</keyword>
<keyword id="KW-0460">Magnesium</keyword>
<keyword id="KW-0479">Metal-binding</keyword>
<keyword id="KW-1185">Reference proteome</keyword>
<keyword id="KW-0808">Transferase</keyword>
<accession>P19816</accession>
<accession>O68267</accession>
<reference key="1">
    <citation type="journal article" date="1990" name="Nucleic Acids Res.">
        <title>Nucleotide sequence of rfaI and rfaJ genes encoding lipopolysaccharide glycosyl transferases from Salmonella typhimurium.</title>
        <authorList>
            <person name="Carstenius P."/>
            <person name="Flock J.-I."/>
            <person name="Lindberg A."/>
        </authorList>
    </citation>
    <scope>NUCLEOTIDE SEQUENCE [GENOMIC DNA]</scope>
    <source>
        <strain>LT2</strain>
    </source>
</reference>
<reference key="2">
    <citation type="journal article" date="1998" name="J. Biol. Chem.">
        <title>The assembly system for the lipopolysaccharide R2 core-type of Escherichia coli is a hybrid of those found in Escherichia coli K-12 and Salmonella enterica. Structure and function of the R2 WaaK and WaaL homologs.</title>
        <authorList>
            <person name="Heinrichs D.E."/>
            <person name="Monteiro M.A."/>
            <person name="Perry M.B."/>
            <person name="Whitfield C."/>
        </authorList>
    </citation>
    <scope>NUCLEOTIDE SEQUENCE [GENOMIC DNA]</scope>
    <source>
        <strain>LT2</strain>
    </source>
</reference>
<reference key="3">
    <citation type="journal article" date="2001" name="Nature">
        <title>Complete genome sequence of Salmonella enterica serovar Typhimurium LT2.</title>
        <authorList>
            <person name="McClelland M."/>
            <person name="Sanderson K.E."/>
            <person name="Spieth J."/>
            <person name="Clifton S.W."/>
            <person name="Latreille P."/>
            <person name="Courtney L."/>
            <person name="Porwollik S."/>
            <person name="Ali J."/>
            <person name="Dante M."/>
            <person name="Du F."/>
            <person name="Hou S."/>
            <person name="Layman D."/>
            <person name="Leonard S."/>
            <person name="Nguyen C."/>
            <person name="Scott K."/>
            <person name="Holmes A."/>
            <person name="Grewal N."/>
            <person name="Mulvaney E."/>
            <person name="Ryan E."/>
            <person name="Sun H."/>
            <person name="Florea L."/>
            <person name="Miller W."/>
            <person name="Stoneking T."/>
            <person name="Nhan M."/>
            <person name="Waterston R."/>
            <person name="Wilson R.K."/>
        </authorList>
    </citation>
    <scope>NUCLEOTIDE SEQUENCE [LARGE SCALE GENOMIC DNA]</scope>
    <source>
        <strain>LT2 / SGSC1412 / ATCC 700720</strain>
    </source>
</reference>
<reference key="4">
    <citation type="journal article" date="1969" name="Biochemistry">
        <title>Studies of a phospholipid-requiring bacterial enzyme. I. Purification and properties of uridine diphosphate galactose: lipopolysaccharide alpha-3-galactosyl transferase.</title>
        <authorList>
            <person name="Endo A."/>
            <person name="Rothfield L."/>
        </authorList>
    </citation>
    <scope>FUNCTION</scope>
    <scope>CATALYTIC ACTIVITY</scope>
    <scope>COFACTOR</scope>
    <scope>ACTIVITY REGULATION</scope>
    <scope>BIOPHYSICOCHEMICAL PROPERTIES</scope>
    <scope>PATHWAY</scope>
    <source>
        <strain>LT2</strain>
    </source>
</reference>
<reference key="5">
    <citation type="journal article" date="1985" name="Can. J. Microbiol.">
        <title>Temperature-sensitive mutants in rfaI and rfaJ, genes for galactosyltransferase I and glucosyltransferase II, for synthesis of lipopolysaccharide in Salmonella typhimurium.</title>
        <authorList>
            <person name="Kadam S.K."/>
            <person name="Peppler M.S."/>
            <person name="Sanderson K.E."/>
        </authorList>
    </citation>
    <scope>DISRUPTION PHENOTYPE</scope>
    <scope>PATHWAY</scope>
</reference>
<reference key="6">
    <citation type="journal article" date="1985" name="J. Bacteriol.">
        <title>Cloning of rfaG, B, I, and J genes for glycosyltransferase enzymes for synthesis of the lipopolysaccharide core of Salmonella typhimurium.</title>
        <authorList>
            <person name="Kadam S.K."/>
            <person name="Rehemtulla A."/>
            <person name="Sanderson K.E."/>
        </authorList>
    </citation>
    <scope>DISRUPTION PHENOTYPE</scope>
</reference>
<reference key="7">
    <citation type="journal article" date="2006" name="Infect. Immun.">
        <title>The outer core lipopolysaccharide of Salmonella enterica serovar Typhi is required for bacterial entry into epithelial cells.</title>
        <authorList>
            <person name="Hoare A."/>
            <person name="Bittner M."/>
            <person name="Carter J."/>
            <person name="Alvarez S."/>
            <person name="Zaldivar M."/>
            <person name="Bravo D."/>
            <person name="Valvano M.A."/>
            <person name="Contreras I."/>
        </authorList>
    </citation>
    <scope>DISRUPTION PHENOTYPE</scope>
    <source>
        <strain>Ty2</strain>
    </source>
</reference>
<reference key="8">
    <citation type="journal article" date="2014" name="Biochemistry">
        <title>In vitro assembly of the outer core of the lipopolysaccharide from Escherichia coli K-12 and Salmonella typhimurium.</title>
        <authorList>
            <person name="Qian J."/>
            <person name="Garrett T.A."/>
            <person name="Raetz C.R."/>
        </authorList>
    </citation>
    <scope>FUNCTION</scope>
    <scope>CATALYTIC ACTIVITY</scope>
    <scope>COFACTOR</scope>
    <scope>PATHWAY</scope>
    <source>
        <strain>LT2</strain>
    </source>
</reference>